<protein>
    <recommendedName>
        <fullName evidence="1">Pantothenate synthetase</fullName>
        <shortName evidence="1">PS</shortName>
        <ecNumber evidence="1">6.3.2.1</ecNumber>
    </recommendedName>
    <alternativeName>
        <fullName evidence="1">Pantoate--beta-alanine ligase</fullName>
    </alternativeName>
    <alternativeName>
        <fullName evidence="1">Pantoate-activating enzyme</fullName>
    </alternativeName>
</protein>
<gene>
    <name evidence="1" type="primary">panC</name>
    <name type="ordered locus">VV1_1642</name>
</gene>
<keyword id="KW-0067">ATP-binding</keyword>
<keyword id="KW-0963">Cytoplasm</keyword>
<keyword id="KW-0436">Ligase</keyword>
<keyword id="KW-0547">Nucleotide-binding</keyword>
<keyword id="KW-0566">Pantothenate biosynthesis</keyword>
<accession>Q8DC12</accession>
<reference key="1">
    <citation type="submission" date="2002-12" db="EMBL/GenBank/DDBJ databases">
        <title>Complete genome sequence of Vibrio vulnificus CMCP6.</title>
        <authorList>
            <person name="Rhee J.H."/>
            <person name="Kim S.Y."/>
            <person name="Chung S.S."/>
            <person name="Kim J.J."/>
            <person name="Moon Y.H."/>
            <person name="Jeong H."/>
            <person name="Choy H.E."/>
        </authorList>
    </citation>
    <scope>NUCLEOTIDE SEQUENCE [LARGE SCALE GENOMIC DNA]</scope>
    <source>
        <strain>CMCP6</strain>
    </source>
</reference>
<dbReference type="EC" id="6.3.2.1" evidence="1"/>
<dbReference type="EMBL" id="AE016795">
    <property type="protein sequence ID" value="AAO10059.1"/>
    <property type="molecule type" value="Genomic_DNA"/>
</dbReference>
<dbReference type="RefSeq" id="WP_011079564.1">
    <property type="nucleotide sequence ID" value="NC_004459.3"/>
</dbReference>
<dbReference type="SMR" id="Q8DC12"/>
<dbReference type="KEGG" id="vvu:VV1_1642"/>
<dbReference type="HOGENOM" id="CLU_047148_0_0_6"/>
<dbReference type="UniPathway" id="UPA00028">
    <property type="reaction ID" value="UER00005"/>
</dbReference>
<dbReference type="Proteomes" id="UP000002275">
    <property type="component" value="Chromosome 1"/>
</dbReference>
<dbReference type="GO" id="GO:0005829">
    <property type="term" value="C:cytosol"/>
    <property type="evidence" value="ECO:0007669"/>
    <property type="project" value="TreeGrafter"/>
</dbReference>
<dbReference type="GO" id="GO:0005524">
    <property type="term" value="F:ATP binding"/>
    <property type="evidence" value="ECO:0007669"/>
    <property type="project" value="UniProtKB-KW"/>
</dbReference>
<dbReference type="GO" id="GO:0004592">
    <property type="term" value="F:pantoate-beta-alanine ligase activity"/>
    <property type="evidence" value="ECO:0007669"/>
    <property type="project" value="UniProtKB-UniRule"/>
</dbReference>
<dbReference type="GO" id="GO:0015940">
    <property type="term" value="P:pantothenate biosynthetic process"/>
    <property type="evidence" value="ECO:0007669"/>
    <property type="project" value="UniProtKB-UniRule"/>
</dbReference>
<dbReference type="CDD" id="cd00560">
    <property type="entry name" value="PanC"/>
    <property type="match status" value="1"/>
</dbReference>
<dbReference type="FunFam" id="3.40.50.620:FF:000013">
    <property type="entry name" value="Pantothenate synthetase"/>
    <property type="match status" value="1"/>
</dbReference>
<dbReference type="Gene3D" id="3.40.50.620">
    <property type="entry name" value="HUPs"/>
    <property type="match status" value="1"/>
</dbReference>
<dbReference type="Gene3D" id="3.30.1300.10">
    <property type="entry name" value="Pantoate-beta-alanine ligase, C-terminal domain"/>
    <property type="match status" value="1"/>
</dbReference>
<dbReference type="HAMAP" id="MF_00158">
    <property type="entry name" value="PanC"/>
    <property type="match status" value="1"/>
</dbReference>
<dbReference type="InterPro" id="IPR004821">
    <property type="entry name" value="Cyt_trans-like"/>
</dbReference>
<dbReference type="InterPro" id="IPR003721">
    <property type="entry name" value="Pantoate_ligase"/>
</dbReference>
<dbReference type="InterPro" id="IPR042176">
    <property type="entry name" value="Pantoate_ligase_C"/>
</dbReference>
<dbReference type="InterPro" id="IPR014729">
    <property type="entry name" value="Rossmann-like_a/b/a_fold"/>
</dbReference>
<dbReference type="NCBIfam" id="TIGR00125">
    <property type="entry name" value="cyt_tran_rel"/>
    <property type="match status" value="1"/>
</dbReference>
<dbReference type="NCBIfam" id="TIGR00018">
    <property type="entry name" value="panC"/>
    <property type="match status" value="1"/>
</dbReference>
<dbReference type="PANTHER" id="PTHR21299">
    <property type="entry name" value="CYTIDYLATE KINASE/PANTOATE-BETA-ALANINE LIGASE"/>
    <property type="match status" value="1"/>
</dbReference>
<dbReference type="PANTHER" id="PTHR21299:SF1">
    <property type="entry name" value="PANTOATE--BETA-ALANINE LIGASE"/>
    <property type="match status" value="1"/>
</dbReference>
<dbReference type="Pfam" id="PF02569">
    <property type="entry name" value="Pantoate_ligase"/>
    <property type="match status" value="1"/>
</dbReference>
<dbReference type="SUPFAM" id="SSF52374">
    <property type="entry name" value="Nucleotidylyl transferase"/>
    <property type="match status" value="1"/>
</dbReference>
<name>PANC_VIBVU</name>
<evidence type="ECO:0000255" key="1">
    <source>
        <dbReference type="HAMAP-Rule" id="MF_00158"/>
    </source>
</evidence>
<comment type="function">
    <text evidence="1">Catalyzes the condensation of pantoate with beta-alanine in an ATP-dependent reaction via a pantoyl-adenylate intermediate.</text>
</comment>
<comment type="catalytic activity">
    <reaction evidence="1">
        <text>(R)-pantoate + beta-alanine + ATP = (R)-pantothenate + AMP + diphosphate + H(+)</text>
        <dbReference type="Rhea" id="RHEA:10912"/>
        <dbReference type="ChEBI" id="CHEBI:15378"/>
        <dbReference type="ChEBI" id="CHEBI:15980"/>
        <dbReference type="ChEBI" id="CHEBI:29032"/>
        <dbReference type="ChEBI" id="CHEBI:30616"/>
        <dbReference type="ChEBI" id="CHEBI:33019"/>
        <dbReference type="ChEBI" id="CHEBI:57966"/>
        <dbReference type="ChEBI" id="CHEBI:456215"/>
        <dbReference type="EC" id="6.3.2.1"/>
    </reaction>
</comment>
<comment type="pathway">
    <text evidence="1">Cofactor biosynthesis; (R)-pantothenate biosynthesis; (R)-pantothenate from (R)-pantoate and beta-alanine: step 1/1.</text>
</comment>
<comment type="subunit">
    <text evidence="1">Homodimer.</text>
</comment>
<comment type="subcellular location">
    <subcellularLocation>
        <location evidence="1">Cytoplasm</location>
    </subcellularLocation>
</comment>
<comment type="miscellaneous">
    <text evidence="1">The reaction proceeds by a bi uni uni bi ping pong mechanism.</text>
</comment>
<comment type="similarity">
    <text evidence="1">Belongs to the pantothenate synthetase family.</text>
</comment>
<organism>
    <name type="scientific">Vibrio vulnificus (strain CMCP6)</name>
    <dbReference type="NCBI Taxonomy" id="216895"/>
    <lineage>
        <taxon>Bacteria</taxon>
        <taxon>Pseudomonadati</taxon>
        <taxon>Pseudomonadota</taxon>
        <taxon>Gammaproteobacteria</taxon>
        <taxon>Vibrionales</taxon>
        <taxon>Vibrionaceae</taxon>
        <taxon>Vibrio</taxon>
    </lineage>
</organism>
<proteinExistence type="inferred from homology"/>
<sequence>MQTFAEISALREQIKTFKREGRRIAFVPTMGNLHEGHLTLVRKAREHADIVVVSIFVNPMQFDRADDLNNYPRTLEDDLSKLNGEAVELVFTPTPEMIYPEGLDKQTLVEVPGLSTMLEGASRPGHFRGVATVVTKLFNIVQPDVACFGEKDFQQLAIIRKMTTDLAMDIEIIGVPTVREMDGLAMSSRNGLLTIDERQRAPVLARTMRWISSAIRGGRDDFASIIEDASDQLRAAGLHPDEIFIRDARTLQVVNAESTQAVILMSAFLGKARLIDNQVVELVKDSKEEVDSAESESENSH</sequence>
<feature type="chain" id="PRO_0000128287" description="Pantothenate synthetase">
    <location>
        <begin position="1"/>
        <end position="301"/>
    </location>
</feature>
<feature type="active site" description="Proton donor" evidence="1">
    <location>
        <position position="37"/>
    </location>
</feature>
<feature type="binding site" evidence="1">
    <location>
        <begin position="30"/>
        <end position="37"/>
    </location>
    <ligand>
        <name>ATP</name>
        <dbReference type="ChEBI" id="CHEBI:30616"/>
    </ligand>
</feature>
<feature type="binding site" evidence="1">
    <location>
        <position position="61"/>
    </location>
    <ligand>
        <name>(R)-pantoate</name>
        <dbReference type="ChEBI" id="CHEBI:15980"/>
    </ligand>
</feature>
<feature type="binding site" evidence="1">
    <location>
        <position position="61"/>
    </location>
    <ligand>
        <name>beta-alanine</name>
        <dbReference type="ChEBI" id="CHEBI:57966"/>
    </ligand>
</feature>
<feature type="binding site" evidence="1">
    <location>
        <begin position="149"/>
        <end position="152"/>
    </location>
    <ligand>
        <name>ATP</name>
        <dbReference type="ChEBI" id="CHEBI:30616"/>
    </ligand>
</feature>
<feature type="binding site" evidence="1">
    <location>
        <position position="155"/>
    </location>
    <ligand>
        <name>(R)-pantoate</name>
        <dbReference type="ChEBI" id="CHEBI:15980"/>
    </ligand>
</feature>
<feature type="binding site" evidence="1">
    <location>
        <position position="178"/>
    </location>
    <ligand>
        <name>ATP</name>
        <dbReference type="ChEBI" id="CHEBI:30616"/>
    </ligand>
</feature>
<feature type="binding site" evidence="1">
    <location>
        <begin position="186"/>
        <end position="189"/>
    </location>
    <ligand>
        <name>ATP</name>
        <dbReference type="ChEBI" id="CHEBI:30616"/>
    </ligand>
</feature>